<organism>
    <name type="scientific">Beijerinckia indica subsp. indica (strain ATCC 9039 / DSM 1715 / NCIMB 8712)</name>
    <dbReference type="NCBI Taxonomy" id="395963"/>
    <lineage>
        <taxon>Bacteria</taxon>
        <taxon>Pseudomonadati</taxon>
        <taxon>Pseudomonadota</taxon>
        <taxon>Alphaproteobacteria</taxon>
        <taxon>Hyphomicrobiales</taxon>
        <taxon>Beijerinckiaceae</taxon>
        <taxon>Beijerinckia</taxon>
    </lineage>
</organism>
<comment type="function">
    <text evidence="1">Catalyzes the methylthiolation of an aspartic acid residue of ribosomal protein uS12.</text>
</comment>
<comment type="catalytic activity">
    <reaction evidence="1">
        <text>L-aspartate(89)-[ribosomal protein uS12]-hydrogen + (sulfur carrier)-SH + AH2 + 2 S-adenosyl-L-methionine = 3-methylsulfanyl-L-aspartate(89)-[ribosomal protein uS12]-hydrogen + (sulfur carrier)-H + 5'-deoxyadenosine + L-methionine + A + S-adenosyl-L-homocysteine + 2 H(+)</text>
        <dbReference type="Rhea" id="RHEA:37087"/>
        <dbReference type="Rhea" id="RHEA-COMP:10460"/>
        <dbReference type="Rhea" id="RHEA-COMP:10461"/>
        <dbReference type="Rhea" id="RHEA-COMP:14737"/>
        <dbReference type="Rhea" id="RHEA-COMP:14739"/>
        <dbReference type="ChEBI" id="CHEBI:13193"/>
        <dbReference type="ChEBI" id="CHEBI:15378"/>
        <dbReference type="ChEBI" id="CHEBI:17319"/>
        <dbReference type="ChEBI" id="CHEBI:17499"/>
        <dbReference type="ChEBI" id="CHEBI:29917"/>
        <dbReference type="ChEBI" id="CHEBI:29961"/>
        <dbReference type="ChEBI" id="CHEBI:57844"/>
        <dbReference type="ChEBI" id="CHEBI:57856"/>
        <dbReference type="ChEBI" id="CHEBI:59789"/>
        <dbReference type="ChEBI" id="CHEBI:64428"/>
        <dbReference type="ChEBI" id="CHEBI:73599"/>
        <dbReference type="EC" id="2.8.4.4"/>
    </reaction>
</comment>
<comment type="cofactor">
    <cofactor evidence="1">
        <name>[4Fe-4S] cluster</name>
        <dbReference type="ChEBI" id="CHEBI:49883"/>
    </cofactor>
    <text evidence="1">Binds 2 [4Fe-4S] clusters. One cluster is coordinated with 3 cysteines and an exchangeable S-adenosyl-L-methionine.</text>
</comment>
<comment type="subcellular location">
    <subcellularLocation>
        <location evidence="1">Cytoplasm</location>
    </subcellularLocation>
</comment>
<comment type="similarity">
    <text evidence="1">Belongs to the methylthiotransferase family. RimO subfamily.</text>
</comment>
<name>RIMO_BEII9</name>
<evidence type="ECO:0000255" key="1">
    <source>
        <dbReference type="HAMAP-Rule" id="MF_01865"/>
    </source>
</evidence>
<evidence type="ECO:0000255" key="2">
    <source>
        <dbReference type="PROSITE-ProRule" id="PRU01266"/>
    </source>
</evidence>
<keyword id="KW-0004">4Fe-4S</keyword>
<keyword id="KW-0963">Cytoplasm</keyword>
<keyword id="KW-0408">Iron</keyword>
<keyword id="KW-0411">Iron-sulfur</keyword>
<keyword id="KW-0479">Metal-binding</keyword>
<keyword id="KW-1185">Reference proteome</keyword>
<keyword id="KW-0949">S-adenosyl-L-methionine</keyword>
<keyword id="KW-0808">Transferase</keyword>
<proteinExistence type="inferred from homology"/>
<protein>
    <recommendedName>
        <fullName evidence="1">Ribosomal protein uS12 methylthiotransferase RimO</fullName>
        <shortName evidence="1">uS12 MTTase</shortName>
        <shortName evidence="1">uS12 methylthiotransferase</shortName>
        <ecNumber evidence="1">2.8.4.4</ecNumber>
    </recommendedName>
    <alternativeName>
        <fullName evidence="1">Ribosomal protein uS12 (aspartate-C(3))-methylthiotransferase</fullName>
    </alternativeName>
    <alternativeName>
        <fullName evidence="1">Ribosome maturation factor RimO</fullName>
    </alternativeName>
</protein>
<feature type="chain" id="PRO_0000374712" description="Ribosomal protein uS12 methylthiotransferase RimO">
    <location>
        <begin position="1"/>
        <end position="449"/>
    </location>
</feature>
<feature type="domain" description="MTTase N-terminal" evidence="1">
    <location>
        <begin position="16"/>
        <end position="126"/>
    </location>
</feature>
<feature type="domain" description="Radical SAM core" evidence="2">
    <location>
        <begin position="143"/>
        <end position="381"/>
    </location>
</feature>
<feature type="domain" description="TRAM" evidence="1">
    <location>
        <begin position="384"/>
        <end position="449"/>
    </location>
</feature>
<feature type="binding site" evidence="1">
    <location>
        <position position="25"/>
    </location>
    <ligand>
        <name>[4Fe-4S] cluster</name>
        <dbReference type="ChEBI" id="CHEBI:49883"/>
        <label>1</label>
    </ligand>
</feature>
<feature type="binding site" evidence="1">
    <location>
        <position position="61"/>
    </location>
    <ligand>
        <name>[4Fe-4S] cluster</name>
        <dbReference type="ChEBI" id="CHEBI:49883"/>
        <label>1</label>
    </ligand>
</feature>
<feature type="binding site" evidence="1">
    <location>
        <position position="90"/>
    </location>
    <ligand>
        <name>[4Fe-4S] cluster</name>
        <dbReference type="ChEBI" id="CHEBI:49883"/>
        <label>1</label>
    </ligand>
</feature>
<feature type="binding site" evidence="1">
    <location>
        <position position="157"/>
    </location>
    <ligand>
        <name>[4Fe-4S] cluster</name>
        <dbReference type="ChEBI" id="CHEBI:49883"/>
        <label>2</label>
        <note>4Fe-4S-S-AdoMet</note>
    </ligand>
</feature>
<feature type="binding site" evidence="1">
    <location>
        <position position="161"/>
    </location>
    <ligand>
        <name>[4Fe-4S] cluster</name>
        <dbReference type="ChEBI" id="CHEBI:49883"/>
        <label>2</label>
        <note>4Fe-4S-S-AdoMet</note>
    </ligand>
</feature>
<feature type="binding site" evidence="1">
    <location>
        <position position="164"/>
    </location>
    <ligand>
        <name>[4Fe-4S] cluster</name>
        <dbReference type="ChEBI" id="CHEBI:49883"/>
        <label>2</label>
        <note>4Fe-4S-S-AdoMet</note>
    </ligand>
</feature>
<reference key="1">
    <citation type="journal article" date="2010" name="J. Bacteriol.">
        <title>Complete genome sequence of Beijerinckia indica subsp. indica.</title>
        <authorList>
            <person name="Tamas I."/>
            <person name="Dedysh S.N."/>
            <person name="Liesack W."/>
            <person name="Stott M.B."/>
            <person name="Alam M."/>
            <person name="Murrell J.C."/>
            <person name="Dunfield P.F."/>
        </authorList>
    </citation>
    <scope>NUCLEOTIDE SEQUENCE [LARGE SCALE GENOMIC DNA]</scope>
    <source>
        <strain>ATCC 9039 / DSM 1715 / NCIMB 8712</strain>
    </source>
</reference>
<gene>
    <name evidence="1" type="primary">rimO</name>
    <name type="ordered locus">Bind_2295</name>
</gene>
<sequence length="449" mass="49547">MAHPVMTFDKPSSASPKISFVSLGCPKALVDSERIITRLRAEGYELTKSHRGADAVIVNTCGFLDSAKAESLAAIGEAAAENGKIIVTGCMGAEPESLQTAYPDLFAITGPQAYESVMEAVHAAIAPPDNPFTELVPPQGIKLTPRHYAYLKISEGCNNRCSFCIIPHLRGDLVSRPIGEILQEAEKLVSAGVKEILVVSQDTSAYGVDLKYAETLYGDRTLRSKFIDLARELGSLGVWVRLHYIYPYPHVDAVLDLMAEGKILPYLDIPFQHASRNVLRAMRRPGDQEKTLSRIEEWRKLCPDLTLRSTFIVGFPGETEDDFQILLDWLSEAKLDRVGAFKYEPVADAPANDLDLTPVAPEVQTRRYQRFMEHQQKISARRLREKIGKHVSVIIDEASPKAAIGRTKGDAPSIDGKVHITTHRPLRVGDIVKVKIEAADAYDLHGKAV</sequence>
<dbReference type="EC" id="2.8.4.4" evidence="1"/>
<dbReference type="EMBL" id="CP001016">
    <property type="protein sequence ID" value="ACB95908.1"/>
    <property type="molecule type" value="Genomic_DNA"/>
</dbReference>
<dbReference type="RefSeq" id="WP_012385261.1">
    <property type="nucleotide sequence ID" value="NC_010581.1"/>
</dbReference>
<dbReference type="SMR" id="B2IHC3"/>
<dbReference type="STRING" id="395963.Bind_2295"/>
<dbReference type="KEGG" id="bid:Bind_2295"/>
<dbReference type="eggNOG" id="COG0621">
    <property type="taxonomic scope" value="Bacteria"/>
</dbReference>
<dbReference type="HOGENOM" id="CLU_018697_0_0_5"/>
<dbReference type="OrthoDB" id="9805215at2"/>
<dbReference type="Proteomes" id="UP000001695">
    <property type="component" value="Chromosome"/>
</dbReference>
<dbReference type="GO" id="GO:0005829">
    <property type="term" value="C:cytosol"/>
    <property type="evidence" value="ECO:0007669"/>
    <property type="project" value="TreeGrafter"/>
</dbReference>
<dbReference type="GO" id="GO:0051539">
    <property type="term" value="F:4 iron, 4 sulfur cluster binding"/>
    <property type="evidence" value="ECO:0007669"/>
    <property type="project" value="UniProtKB-UniRule"/>
</dbReference>
<dbReference type="GO" id="GO:0035599">
    <property type="term" value="F:aspartic acid methylthiotransferase activity"/>
    <property type="evidence" value="ECO:0007669"/>
    <property type="project" value="TreeGrafter"/>
</dbReference>
<dbReference type="GO" id="GO:0046872">
    <property type="term" value="F:metal ion binding"/>
    <property type="evidence" value="ECO:0007669"/>
    <property type="project" value="UniProtKB-KW"/>
</dbReference>
<dbReference type="GO" id="GO:0103039">
    <property type="term" value="F:protein methylthiotransferase activity"/>
    <property type="evidence" value="ECO:0007669"/>
    <property type="project" value="UniProtKB-EC"/>
</dbReference>
<dbReference type="GO" id="GO:0006400">
    <property type="term" value="P:tRNA modification"/>
    <property type="evidence" value="ECO:0007669"/>
    <property type="project" value="InterPro"/>
</dbReference>
<dbReference type="CDD" id="cd01335">
    <property type="entry name" value="Radical_SAM"/>
    <property type="match status" value="1"/>
</dbReference>
<dbReference type="FunFam" id="3.40.50.12160:FF:000002">
    <property type="entry name" value="Ribosomal protein S12 methylthiotransferase RimO"/>
    <property type="match status" value="1"/>
</dbReference>
<dbReference type="FunFam" id="3.80.30.20:FF:000001">
    <property type="entry name" value="tRNA-2-methylthio-N(6)-dimethylallyladenosine synthase 2"/>
    <property type="match status" value="1"/>
</dbReference>
<dbReference type="Gene3D" id="3.40.50.12160">
    <property type="entry name" value="Methylthiotransferase, N-terminal domain"/>
    <property type="match status" value="1"/>
</dbReference>
<dbReference type="Gene3D" id="2.40.50.140">
    <property type="entry name" value="Nucleic acid-binding proteins"/>
    <property type="match status" value="1"/>
</dbReference>
<dbReference type="Gene3D" id="3.80.30.20">
    <property type="entry name" value="tm_1862 like domain"/>
    <property type="match status" value="1"/>
</dbReference>
<dbReference type="HAMAP" id="MF_01865">
    <property type="entry name" value="MTTase_RimO"/>
    <property type="match status" value="1"/>
</dbReference>
<dbReference type="InterPro" id="IPR006638">
    <property type="entry name" value="Elp3/MiaA/NifB-like_rSAM"/>
</dbReference>
<dbReference type="InterPro" id="IPR005839">
    <property type="entry name" value="Methylthiotransferase"/>
</dbReference>
<dbReference type="InterPro" id="IPR020612">
    <property type="entry name" value="Methylthiotransferase_CS"/>
</dbReference>
<dbReference type="InterPro" id="IPR013848">
    <property type="entry name" value="Methylthiotransferase_N"/>
</dbReference>
<dbReference type="InterPro" id="IPR038135">
    <property type="entry name" value="Methylthiotransferase_N_sf"/>
</dbReference>
<dbReference type="InterPro" id="IPR012340">
    <property type="entry name" value="NA-bd_OB-fold"/>
</dbReference>
<dbReference type="InterPro" id="IPR005840">
    <property type="entry name" value="Ribosomal_uS12_MeSTrfase_RimO"/>
</dbReference>
<dbReference type="InterPro" id="IPR007197">
    <property type="entry name" value="rSAM"/>
</dbReference>
<dbReference type="InterPro" id="IPR023404">
    <property type="entry name" value="rSAM_horseshoe"/>
</dbReference>
<dbReference type="InterPro" id="IPR002792">
    <property type="entry name" value="TRAM_dom"/>
</dbReference>
<dbReference type="NCBIfam" id="TIGR01125">
    <property type="entry name" value="30S ribosomal protein S12 methylthiotransferase RimO"/>
    <property type="match status" value="1"/>
</dbReference>
<dbReference type="NCBIfam" id="TIGR00089">
    <property type="entry name" value="MiaB/RimO family radical SAM methylthiotransferase"/>
    <property type="match status" value="1"/>
</dbReference>
<dbReference type="PANTHER" id="PTHR43837">
    <property type="entry name" value="RIBOSOMAL PROTEIN S12 METHYLTHIOTRANSFERASE RIMO"/>
    <property type="match status" value="1"/>
</dbReference>
<dbReference type="PANTHER" id="PTHR43837:SF1">
    <property type="entry name" value="RIBOSOMAL PROTEIN US12 METHYLTHIOTRANSFERASE RIMO"/>
    <property type="match status" value="1"/>
</dbReference>
<dbReference type="Pfam" id="PF04055">
    <property type="entry name" value="Radical_SAM"/>
    <property type="match status" value="1"/>
</dbReference>
<dbReference type="Pfam" id="PF18693">
    <property type="entry name" value="TRAM_2"/>
    <property type="match status" value="1"/>
</dbReference>
<dbReference type="Pfam" id="PF00919">
    <property type="entry name" value="UPF0004"/>
    <property type="match status" value="1"/>
</dbReference>
<dbReference type="SFLD" id="SFLDG01082">
    <property type="entry name" value="B12-binding_domain_containing"/>
    <property type="match status" value="1"/>
</dbReference>
<dbReference type="SFLD" id="SFLDG01061">
    <property type="entry name" value="methylthiotransferase"/>
    <property type="match status" value="1"/>
</dbReference>
<dbReference type="SFLD" id="SFLDF00274">
    <property type="entry name" value="ribosomal_protein_S12_methylth"/>
    <property type="match status" value="1"/>
</dbReference>
<dbReference type="SMART" id="SM00729">
    <property type="entry name" value="Elp3"/>
    <property type="match status" value="1"/>
</dbReference>
<dbReference type="SUPFAM" id="SSF102114">
    <property type="entry name" value="Radical SAM enzymes"/>
    <property type="match status" value="1"/>
</dbReference>
<dbReference type="PROSITE" id="PS51449">
    <property type="entry name" value="MTTASE_N"/>
    <property type="match status" value="1"/>
</dbReference>
<dbReference type="PROSITE" id="PS01278">
    <property type="entry name" value="MTTASE_RADICAL"/>
    <property type="match status" value="1"/>
</dbReference>
<dbReference type="PROSITE" id="PS51918">
    <property type="entry name" value="RADICAL_SAM"/>
    <property type="match status" value="1"/>
</dbReference>
<dbReference type="PROSITE" id="PS50926">
    <property type="entry name" value="TRAM"/>
    <property type="match status" value="1"/>
</dbReference>
<accession>B2IHC3</accession>